<reference key="1">
    <citation type="journal article" date="2011" name="BMC Genomics">
        <title>Complete genome sequence of the filamentous anoxygenic phototrophic bacterium Chloroflexus aurantiacus.</title>
        <authorList>
            <person name="Tang K.H."/>
            <person name="Barry K."/>
            <person name="Chertkov O."/>
            <person name="Dalin E."/>
            <person name="Han C.S."/>
            <person name="Hauser L.J."/>
            <person name="Honchak B.M."/>
            <person name="Karbach L.E."/>
            <person name="Land M.L."/>
            <person name="Lapidus A."/>
            <person name="Larimer F.W."/>
            <person name="Mikhailova N."/>
            <person name="Pitluck S."/>
            <person name="Pierson B.K."/>
            <person name="Blankenship R.E."/>
        </authorList>
    </citation>
    <scope>NUCLEOTIDE SEQUENCE [LARGE SCALE GENOMIC DNA]</scope>
    <source>
        <strain>ATCC 29366 / DSM 635 / J-10-fl</strain>
    </source>
</reference>
<dbReference type="EMBL" id="CP000909">
    <property type="protein sequence ID" value="ABY33739.1"/>
    <property type="molecule type" value="Genomic_DNA"/>
</dbReference>
<dbReference type="RefSeq" id="WP_012256395.1">
    <property type="nucleotide sequence ID" value="NC_010175.1"/>
</dbReference>
<dbReference type="RefSeq" id="YP_001634128.1">
    <property type="nucleotide sequence ID" value="NC_010175.1"/>
</dbReference>
<dbReference type="SMR" id="A9WE79"/>
<dbReference type="FunCoup" id="A9WE79">
    <property type="interactions" value="432"/>
</dbReference>
<dbReference type="STRING" id="324602.Caur_0491"/>
<dbReference type="EnsemblBacteria" id="ABY33739">
    <property type="protein sequence ID" value="ABY33739"/>
    <property type="gene ID" value="Caur_0491"/>
</dbReference>
<dbReference type="KEGG" id="cau:Caur_0491"/>
<dbReference type="PATRIC" id="fig|324602.8.peg.558"/>
<dbReference type="eggNOG" id="COG0216">
    <property type="taxonomic scope" value="Bacteria"/>
</dbReference>
<dbReference type="HOGENOM" id="CLU_036856_0_1_0"/>
<dbReference type="InParanoid" id="A9WE79"/>
<dbReference type="Proteomes" id="UP000002008">
    <property type="component" value="Chromosome"/>
</dbReference>
<dbReference type="GO" id="GO:0005737">
    <property type="term" value="C:cytoplasm"/>
    <property type="evidence" value="ECO:0007669"/>
    <property type="project" value="UniProtKB-SubCell"/>
</dbReference>
<dbReference type="GO" id="GO:0016149">
    <property type="term" value="F:translation release factor activity, codon specific"/>
    <property type="evidence" value="ECO:0007669"/>
    <property type="project" value="UniProtKB-UniRule"/>
</dbReference>
<dbReference type="FunFam" id="3.30.160.20:FF:000004">
    <property type="entry name" value="Peptide chain release factor 1"/>
    <property type="match status" value="1"/>
</dbReference>
<dbReference type="FunFam" id="3.30.70.1660:FF:000002">
    <property type="entry name" value="Peptide chain release factor 1"/>
    <property type="match status" value="1"/>
</dbReference>
<dbReference type="Gene3D" id="3.30.160.20">
    <property type="match status" value="1"/>
</dbReference>
<dbReference type="Gene3D" id="3.30.70.1660">
    <property type="match status" value="2"/>
</dbReference>
<dbReference type="Gene3D" id="6.10.140.1950">
    <property type="match status" value="1"/>
</dbReference>
<dbReference type="HAMAP" id="MF_00093">
    <property type="entry name" value="Rel_fac_1"/>
    <property type="match status" value="1"/>
</dbReference>
<dbReference type="InterPro" id="IPR005139">
    <property type="entry name" value="PCRF"/>
</dbReference>
<dbReference type="InterPro" id="IPR000352">
    <property type="entry name" value="Pep_chain_release_fac_I"/>
</dbReference>
<dbReference type="InterPro" id="IPR045853">
    <property type="entry name" value="Pep_chain_release_fac_I_sf"/>
</dbReference>
<dbReference type="InterPro" id="IPR050057">
    <property type="entry name" value="Prokaryotic/Mito_RF"/>
</dbReference>
<dbReference type="InterPro" id="IPR004373">
    <property type="entry name" value="RF-1"/>
</dbReference>
<dbReference type="NCBIfam" id="TIGR00019">
    <property type="entry name" value="prfA"/>
    <property type="match status" value="1"/>
</dbReference>
<dbReference type="NCBIfam" id="NF001859">
    <property type="entry name" value="PRK00591.1"/>
    <property type="match status" value="1"/>
</dbReference>
<dbReference type="PANTHER" id="PTHR43804">
    <property type="entry name" value="LD18447P"/>
    <property type="match status" value="1"/>
</dbReference>
<dbReference type="PANTHER" id="PTHR43804:SF7">
    <property type="entry name" value="LD18447P"/>
    <property type="match status" value="1"/>
</dbReference>
<dbReference type="Pfam" id="PF03462">
    <property type="entry name" value="PCRF"/>
    <property type="match status" value="1"/>
</dbReference>
<dbReference type="Pfam" id="PF00472">
    <property type="entry name" value="RF-1"/>
    <property type="match status" value="1"/>
</dbReference>
<dbReference type="SMART" id="SM00937">
    <property type="entry name" value="PCRF"/>
    <property type="match status" value="1"/>
</dbReference>
<dbReference type="SUPFAM" id="SSF75620">
    <property type="entry name" value="Release factor"/>
    <property type="match status" value="1"/>
</dbReference>
<dbReference type="PROSITE" id="PS00745">
    <property type="entry name" value="RF_PROK_I"/>
    <property type="match status" value="1"/>
</dbReference>
<evidence type="ECO:0000255" key="1">
    <source>
        <dbReference type="HAMAP-Rule" id="MF_00093"/>
    </source>
</evidence>
<name>RF1_CHLAA</name>
<protein>
    <recommendedName>
        <fullName evidence="1">Peptide chain release factor 1</fullName>
        <shortName evidence="1">RF-1</shortName>
    </recommendedName>
</protein>
<comment type="function">
    <text evidence="1">Peptide chain release factor 1 directs the termination of translation in response to the peptide chain termination codons UAG and UAA.</text>
</comment>
<comment type="subcellular location">
    <subcellularLocation>
        <location evidence="1">Cytoplasm</location>
    </subcellularLocation>
</comment>
<comment type="PTM">
    <text evidence="1">Methylated by PrmC. Methylation increases the termination efficiency of RF1.</text>
</comment>
<comment type="similarity">
    <text evidence="1">Belongs to the prokaryotic/mitochondrial release factor family.</text>
</comment>
<organism>
    <name type="scientific">Chloroflexus aurantiacus (strain ATCC 29366 / DSM 635 / J-10-fl)</name>
    <dbReference type="NCBI Taxonomy" id="324602"/>
    <lineage>
        <taxon>Bacteria</taxon>
        <taxon>Bacillati</taxon>
        <taxon>Chloroflexota</taxon>
        <taxon>Chloroflexia</taxon>
        <taxon>Chloroflexales</taxon>
        <taxon>Chloroflexineae</taxon>
        <taxon>Chloroflexaceae</taxon>
        <taxon>Chloroflexus</taxon>
    </lineage>
</organism>
<keyword id="KW-0963">Cytoplasm</keyword>
<keyword id="KW-0488">Methylation</keyword>
<keyword id="KW-0648">Protein biosynthesis</keyword>
<keyword id="KW-1185">Reference proteome</keyword>
<sequence>MFDKLAAVAARYDELTELMAQPEVATNVTLLQQYAREQREIEDIVNAYREYQATQRAIEEAEAMLEDSDPELRALAQEELETQRKRLASLEEQLKLLLLPRDPNDSKDVIMEIRQGEGGDEAALFAADLFRMYTRFAESRGWKVEVDSLTENGIGGIKEVIFQIHGEGAYSQLKYEGGVHRVQRVPATEARGRIHTSTATVAVLPEVEETEIEIKPEDLRIDVFRSAGHGGQGVNTTDSAVRIVYKPGTPEEIVVTCQDGRSQIQNRERAMTVLRARLYAREQEKRQREIGASRLAQVGSGERAEKIRTYNFPQDRITDHRIGQNFSNLPAVLDGELDKIIEALIIYDNAERLRASGVST</sequence>
<feature type="chain" id="PRO_1000075486" description="Peptide chain release factor 1">
    <location>
        <begin position="1"/>
        <end position="360"/>
    </location>
</feature>
<feature type="modified residue" description="N5-methylglutamine" evidence="1">
    <location>
        <position position="232"/>
    </location>
</feature>
<gene>
    <name evidence="1" type="primary">prfA</name>
    <name type="ordered locus">Caur_0491</name>
</gene>
<accession>A9WE79</accession>
<proteinExistence type="inferred from homology"/>